<reference key="1">
    <citation type="journal article" date="2007" name="Environ. Microbiol.">
        <title>Whole-genome analysis of the ammonia-oxidizing bacterium, Nitrosomonas eutropha C91: implications for niche adaptation.</title>
        <authorList>
            <person name="Stein L.Y."/>
            <person name="Arp D.J."/>
            <person name="Berube P.M."/>
            <person name="Chain P.S."/>
            <person name="Hauser L."/>
            <person name="Jetten M.S."/>
            <person name="Klotz M.G."/>
            <person name="Larimer F.W."/>
            <person name="Norton J.M."/>
            <person name="Op den Camp H.J.M."/>
            <person name="Shin M."/>
            <person name="Wei X."/>
        </authorList>
    </citation>
    <scope>NUCLEOTIDE SEQUENCE [LARGE SCALE GENOMIC DNA]</scope>
    <source>
        <strain>DSM 101675 / C91 / Nm57</strain>
    </source>
</reference>
<organism>
    <name type="scientific">Nitrosomonas eutropha (strain DSM 101675 / C91 / Nm57)</name>
    <dbReference type="NCBI Taxonomy" id="335283"/>
    <lineage>
        <taxon>Bacteria</taxon>
        <taxon>Pseudomonadati</taxon>
        <taxon>Pseudomonadota</taxon>
        <taxon>Betaproteobacteria</taxon>
        <taxon>Nitrosomonadales</taxon>
        <taxon>Nitrosomonadaceae</taxon>
        <taxon>Nitrosomonas</taxon>
    </lineage>
</organism>
<comment type="function">
    <text evidence="1">Major role in the synthesis of nucleoside triphosphates other than ATP. The ATP gamma phosphate is transferred to the NDP beta phosphate via a ping-pong mechanism, using a phosphorylated active-site intermediate.</text>
</comment>
<comment type="catalytic activity">
    <reaction evidence="1">
        <text>a 2'-deoxyribonucleoside 5'-diphosphate + ATP = a 2'-deoxyribonucleoside 5'-triphosphate + ADP</text>
        <dbReference type="Rhea" id="RHEA:44640"/>
        <dbReference type="ChEBI" id="CHEBI:30616"/>
        <dbReference type="ChEBI" id="CHEBI:61560"/>
        <dbReference type="ChEBI" id="CHEBI:73316"/>
        <dbReference type="ChEBI" id="CHEBI:456216"/>
        <dbReference type="EC" id="2.7.4.6"/>
    </reaction>
</comment>
<comment type="catalytic activity">
    <reaction evidence="1">
        <text>a ribonucleoside 5'-diphosphate + ATP = a ribonucleoside 5'-triphosphate + ADP</text>
        <dbReference type="Rhea" id="RHEA:18113"/>
        <dbReference type="ChEBI" id="CHEBI:30616"/>
        <dbReference type="ChEBI" id="CHEBI:57930"/>
        <dbReference type="ChEBI" id="CHEBI:61557"/>
        <dbReference type="ChEBI" id="CHEBI:456216"/>
        <dbReference type="EC" id="2.7.4.6"/>
    </reaction>
</comment>
<comment type="cofactor">
    <cofactor evidence="1">
        <name>Mg(2+)</name>
        <dbReference type="ChEBI" id="CHEBI:18420"/>
    </cofactor>
</comment>
<comment type="subunit">
    <text evidence="1">Homotetramer.</text>
</comment>
<comment type="subcellular location">
    <subcellularLocation>
        <location evidence="1">Cytoplasm</location>
    </subcellularLocation>
</comment>
<comment type="similarity">
    <text evidence="1">Belongs to the NDK family.</text>
</comment>
<proteinExistence type="inferred from homology"/>
<gene>
    <name evidence="1" type="primary">ndk</name>
    <name type="ordered locus">Neut_2172</name>
</gene>
<dbReference type="EC" id="2.7.4.6" evidence="1"/>
<dbReference type="EMBL" id="CP000450">
    <property type="protein sequence ID" value="ABI60394.1"/>
    <property type="molecule type" value="Genomic_DNA"/>
</dbReference>
<dbReference type="RefSeq" id="WP_011635191.1">
    <property type="nucleotide sequence ID" value="NC_008344.1"/>
</dbReference>
<dbReference type="SMR" id="Q0AE38"/>
<dbReference type="STRING" id="335283.Neut_2172"/>
<dbReference type="KEGG" id="net:Neut_2172"/>
<dbReference type="eggNOG" id="COG0105">
    <property type="taxonomic scope" value="Bacteria"/>
</dbReference>
<dbReference type="HOGENOM" id="CLU_060216_8_1_4"/>
<dbReference type="OrthoDB" id="9801161at2"/>
<dbReference type="Proteomes" id="UP000001966">
    <property type="component" value="Chromosome"/>
</dbReference>
<dbReference type="GO" id="GO:0005737">
    <property type="term" value="C:cytoplasm"/>
    <property type="evidence" value="ECO:0007669"/>
    <property type="project" value="UniProtKB-SubCell"/>
</dbReference>
<dbReference type="GO" id="GO:0005524">
    <property type="term" value="F:ATP binding"/>
    <property type="evidence" value="ECO:0007669"/>
    <property type="project" value="UniProtKB-UniRule"/>
</dbReference>
<dbReference type="GO" id="GO:0046872">
    <property type="term" value="F:metal ion binding"/>
    <property type="evidence" value="ECO:0007669"/>
    <property type="project" value="UniProtKB-KW"/>
</dbReference>
<dbReference type="GO" id="GO:0004550">
    <property type="term" value="F:nucleoside diphosphate kinase activity"/>
    <property type="evidence" value="ECO:0007669"/>
    <property type="project" value="UniProtKB-UniRule"/>
</dbReference>
<dbReference type="GO" id="GO:0006241">
    <property type="term" value="P:CTP biosynthetic process"/>
    <property type="evidence" value="ECO:0007669"/>
    <property type="project" value="UniProtKB-UniRule"/>
</dbReference>
<dbReference type="GO" id="GO:0006183">
    <property type="term" value="P:GTP biosynthetic process"/>
    <property type="evidence" value="ECO:0007669"/>
    <property type="project" value="UniProtKB-UniRule"/>
</dbReference>
<dbReference type="GO" id="GO:0006228">
    <property type="term" value="P:UTP biosynthetic process"/>
    <property type="evidence" value="ECO:0007669"/>
    <property type="project" value="UniProtKB-UniRule"/>
</dbReference>
<dbReference type="CDD" id="cd04413">
    <property type="entry name" value="NDPk_I"/>
    <property type="match status" value="1"/>
</dbReference>
<dbReference type="FunFam" id="3.30.70.141:FF:000001">
    <property type="entry name" value="Nucleoside diphosphate kinase"/>
    <property type="match status" value="1"/>
</dbReference>
<dbReference type="Gene3D" id="3.30.70.141">
    <property type="entry name" value="Nucleoside diphosphate kinase-like domain"/>
    <property type="match status" value="1"/>
</dbReference>
<dbReference type="HAMAP" id="MF_00451">
    <property type="entry name" value="NDP_kinase"/>
    <property type="match status" value="1"/>
</dbReference>
<dbReference type="InterPro" id="IPR034907">
    <property type="entry name" value="NDK-like_dom"/>
</dbReference>
<dbReference type="InterPro" id="IPR036850">
    <property type="entry name" value="NDK-like_dom_sf"/>
</dbReference>
<dbReference type="InterPro" id="IPR001564">
    <property type="entry name" value="Nucleoside_diP_kinase"/>
</dbReference>
<dbReference type="InterPro" id="IPR023005">
    <property type="entry name" value="Nucleoside_diP_kinase_AS"/>
</dbReference>
<dbReference type="NCBIfam" id="NF001908">
    <property type="entry name" value="PRK00668.1"/>
    <property type="match status" value="1"/>
</dbReference>
<dbReference type="PANTHER" id="PTHR46161">
    <property type="entry name" value="NUCLEOSIDE DIPHOSPHATE KINASE"/>
    <property type="match status" value="1"/>
</dbReference>
<dbReference type="PANTHER" id="PTHR46161:SF3">
    <property type="entry name" value="NUCLEOSIDE DIPHOSPHATE KINASE DDB_G0292928-RELATED"/>
    <property type="match status" value="1"/>
</dbReference>
<dbReference type="Pfam" id="PF00334">
    <property type="entry name" value="NDK"/>
    <property type="match status" value="1"/>
</dbReference>
<dbReference type="PRINTS" id="PR01243">
    <property type="entry name" value="NUCDPKINASE"/>
</dbReference>
<dbReference type="SMART" id="SM00562">
    <property type="entry name" value="NDK"/>
    <property type="match status" value="1"/>
</dbReference>
<dbReference type="SUPFAM" id="SSF54919">
    <property type="entry name" value="Nucleoside diphosphate kinase, NDK"/>
    <property type="match status" value="1"/>
</dbReference>
<dbReference type="PROSITE" id="PS00469">
    <property type="entry name" value="NDPK"/>
    <property type="match status" value="1"/>
</dbReference>
<dbReference type="PROSITE" id="PS51374">
    <property type="entry name" value="NDPK_LIKE"/>
    <property type="match status" value="1"/>
</dbReference>
<keyword id="KW-0067">ATP-binding</keyword>
<keyword id="KW-0963">Cytoplasm</keyword>
<keyword id="KW-0418">Kinase</keyword>
<keyword id="KW-0460">Magnesium</keyword>
<keyword id="KW-0479">Metal-binding</keyword>
<keyword id="KW-0546">Nucleotide metabolism</keyword>
<keyword id="KW-0547">Nucleotide-binding</keyword>
<keyword id="KW-0597">Phosphoprotein</keyword>
<keyword id="KW-0808">Transferase</keyword>
<feature type="chain" id="PRO_1000026260" description="Nucleoside diphosphate kinase">
    <location>
        <begin position="1"/>
        <end position="141"/>
    </location>
</feature>
<feature type="active site" description="Pros-phosphohistidine intermediate" evidence="1">
    <location>
        <position position="117"/>
    </location>
</feature>
<feature type="binding site" evidence="1">
    <location>
        <position position="11"/>
    </location>
    <ligand>
        <name>ATP</name>
        <dbReference type="ChEBI" id="CHEBI:30616"/>
    </ligand>
</feature>
<feature type="binding site" evidence="1">
    <location>
        <position position="59"/>
    </location>
    <ligand>
        <name>ATP</name>
        <dbReference type="ChEBI" id="CHEBI:30616"/>
    </ligand>
</feature>
<feature type="binding site" evidence="1">
    <location>
        <position position="87"/>
    </location>
    <ligand>
        <name>ATP</name>
        <dbReference type="ChEBI" id="CHEBI:30616"/>
    </ligand>
</feature>
<feature type="binding site" evidence="1">
    <location>
        <position position="93"/>
    </location>
    <ligand>
        <name>ATP</name>
        <dbReference type="ChEBI" id="CHEBI:30616"/>
    </ligand>
</feature>
<feature type="binding site" evidence="1">
    <location>
        <position position="104"/>
    </location>
    <ligand>
        <name>ATP</name>
        <dbReference type="ChEBI" id="CHEBI:30616"/>
    </ligand>
</feature>
<feature type="binding site" evidence="1">
    <location>
        <position position="114"/>
    </location>
    <ligand>
        <name>ATP</name>
        <dbReference type="ChEBI" id="CHEBI:30616"/>
    </ligand>
</feature>
<name>NDK_NITEC</name>
<accession>Q0AE38</accession>
<evidence type="ECO:0000255" key="1">
    <source>
        <dbReference type="HAMAP-Rule" id="MF_00451"/>
    </source>
</evidence>
<protein>
    <recommendedName>
        <fullName evidence="1">Nucleoside diphosphate kinase</fullName>
        <shortName evidence="1">NDK</shortName>
        <shortName evidence="1">NDP kinase</shortName>
        <ecNumber evidence="1">2.7.4.6</ecNumber>
    </recommendedName>
    <alternativeName>
        <fullName evidence="1">Nucleoside-2-P kinase</fullName>
    </alternativeName>
</protein>
<sequence length="141" mass="15524">MVVERTLSIIKPDAVAKNVIGQIYARFEAAGLKVVAARMAHLSRVEAENFYAIHRERPFFKDLVEFMISGPVMIQVLEGENAIAKNRELMGATDPKKAEKGTIRADFAENIDANAVHGSDAPETAAVEIACFFPSLEVYSR</sequence>